<name>KDM5_CAEEL</name>
<comment type="function">
    <text evidence="8 9 10 11">Histone demethylase that specifically demethylates 'Lys-4' of histone H3, thereby playing a central role in histone code (PubMed:17320161). Does not demethylate histone H3 'Lys-9', H3 'Lys-27', H3 'Lys-36', H3 'Lys-79' or H4 'Lys-20' (PubMed:17320161). Demethylates trimethylated and dimethylated but not monomethylated H3 'Lys-4' (PubMed:17320161). Required for normal longevity of the soma in a germline-dependent manner (PubMed:20555324, PubMed:22212395). Implicated in the epigenetic inheritance of lifespan over several generations (PubMed:22012258). Involved in larval development and vulva formation (PubMed:17320161).</text>
</comment>
<comment type="catalytic activity">
    <reaction evidence="8">
        <text>N(6),N(6),N(6)-trimethyl-L-lysyl(4)-[histone H3] + 3 2-oxoglutarate + 3 O2 = L-lysyl(4)-[histone H3] + 3 formaldehyde + 3 succinate + 3 CO2</text>
        <dbReference type="Rhea" id="RHEA:60208"/>
        <dbReference type="Rhea" id="RHEA-COMP:15537"/>
        <dbReference type="Rhea" id="RHEA-COMP:15547"/>
        <dbReference type="ChEBI" id="CHEBI:15379"/>
        <dbReference type="ChEBI" id="CHEBI:16526"/>
        <dbReference type="ChEBI" id="CHEBI:16810"/>
        <dbReference type="ChEBI" id="CHEBI:16842"/>
        <dbReference type="ChEBI" id="CHEBI:29969"/>
        <dbReference type="ChEBI" id="CHEBI:30031"/>
        <dbReference type="ChEBI" id="CHEBI:61961"/>
        <dbReference type="EC" id="1.14.11.67"/>
    </reaction>
</comment>
<comment type="cofactor">
    <cofactor evidence="1">
        <name>Fe(2+)</name>
        <dbReference type="ChEBI" id="CHEBI:29033"/>
    </cofactor>
    <text evidence="1">Binds 1 Fe(2+) ion per subunit.</text>
</comment>
<comment type="subcellular location">
    <subcellularLocation>
        <location evidence="4 5 9">Nucleus</location>
    </subcellularLocation>
</comment>
<comment type="disruption phenotype">
    <text evidence="9 11">RNAi-mediated knockdown decreases lifespan in wild type worms with an intact germline (PubMed:20555324). Results in extended lifespan when egg production is inhibited by the addition of floxuridine (FUDR) or in a glp-1 mutant background which lacks a germline (PubMed:20555324, PubMed:22212395).</text>
</comment>
<comment type="similarity">
    <text evidence="12">Belongs to the JARID1 histone demethylase family.</text>
</comment>
<feature type="chain" id="PRO_0000292420" description="Lysine-specific demethylase rbr-2">
    <location>
        <begin position="1"/>
        <end position="1477"/>
    </location>
</feature>
<feature type="domain" description="JmjN" evidence="5">
    <location>
        <begin position="56"/>
        <end position="97"/>
    </location>
</feature>
<feature type="domain" description="ARID" evidence="4">
    <location>
        <begin position="121"/>
        <end position="218"/>
    </location>
</feature>
<feature type="domain" description="JmjC" evidence="6">
    <location>
        <begin position="468"/>
        <end position="634"/>
    </location>
</feature>
<feature type="zinc finger region" description="PHD-type 1" evidence="3">
    <location>
        <begin position="319"/>
        <end position="371"/>
    </location>
</feature>
<feature type="zinc finger region" description="PHD-type 2" evidence="3">
    <location>
        <begin position="1203"/>
        <end position="1257"/>
    </location>
</feature>
<feature type="zinc finger region" description="PHD-type 3" evidence="3">
    <location>
        <begin position="1411"/>
        <end position="1466"/>
    </location>
</feature>
<feature type="region of interest" description="Disordered" evidence="7">
    <location>
        <begin position="1"/>
        <end position="37"/>
    </location>
</feature>
<feature type="region of interest" description="Disordered" evidence="7">
    <location>
        <begin position="222"/>
        <end position="314"/>
    </location>
</feature>
<feature type="region of interest" description="Disordered" evidence="7">
    <location>
        <begin position="1375"/>
        <end position="1404"/>
    </location>
</feature>
<feature type="coiled-coil region" evidence="2">
    <location>
        <begin position="874"/>
        <end position="926"/>
    </location>
</feature>
<feature type="compositionally biased region" description="Low complexity" evidence="7">
    <location>
        <begin position="9"/>
        <end position="21"/>
    </location>
</feature>
<feature type="compositionally biased region" description="Basic and acidic residues" evidence="7">
    <location>
        <begin position="246"/>
        <end position="259"/>
    </location>
</feature>
<feature type="compositionally biased region" description="Basic residues" evidence="7">
    <location>
        <begin position="272"/>
        <end position="283"/>
    </location>
</feature>
<feature type="compositionally biased region" description="Basic residues" evidence="7">
    <location>
        <begin position="295"/>
        <end position="304"/>
    </location>
</feature>
<feature type="binding site" evidence="6">
    <location>
        <position position="514"/>
    </location>
    <ligand>
        <name>Fe cation</name>
        <dbReference type="ChEBI" id="CHEBI:24875"/>
        <note>catalytic</note>
    </ligand>
</feature>
<feature type="binding site" evidence="6">
    <location>
        <position position="517"/>
    </location>
    <ligand>
        <name>Fe cation</name>
        <dbReference type="ChEBI" id="CHEBI:24875"/>
        <note>catalytic</note>
    </ligand>
</feature>
<feature type="binding site" evidence="6">
    <location>
        <position position="602"/>
    </location>
    <ligand>
        <name>Fe cation</name>
        <dbReference type="ChEBI" id="CHEBI:24875"/>
        <note>catalytic</note>
    </ligand>
</feature>
<reference key="1">
    <citation type="journal article" date="1998" name="Science">
        <title>Genome sequence of the nematode C. elegans: a platform for investigating biology.</title>
        <authorList>
            <consortium name="The C. elegans sequencing consortium"/>
        </authorList>
    </citation>
    <scope>NUCLEOTIDE SEQUENCE [LARGE SCALE GENOMIC DNA]</scope>
    <source>
        <strain>Bristol N2</strain>
    </source>
</reference>
<reference key="2">
    <citation type="journal article" date="2007" name="Cell">
        <title>RBP2 belongs to a family of demethylases, specific for tri-and dimethylated lysine 4 on histone 3.</title>
        <authorList>
            <person name="Christensen J."/>
            <person name="Agger K."/>
            <person name="Cloos P.A.C."/>
            <person name="Pasini D."/>
            <person name="Rose S."/>
            <person name="Sennels L."/>
            <person name="Rappsilber J."/>
            <person name="Hansen K.H."/>
            <person name="Salcini A.E."/>
            <person name="Helin K."/>
        </authorList>
    </citation>
    <scope>FUNCTION AS HISTONE DEMETHYLASE</scope>
    <scope>CATALYTIC ACTIVITY</scope>
</reference>
<reference key="3">
    <citation type="journal article" date="2010" name="Nature">
        <title>Members of the H3K4 trimethylation complex regulate lifespan in a germline-dependent manner in C. elegans.</title>
        <authorList>
            <person name="Greer E.L."/>
            <person name="Maures T.J."/>
            <person name="Hauswirth A.G."/>
            <person name="Green E.M."/>
            <person name="Leeman D.S."/>
            <person name="Maro G.S."/>
            <person name="Han S."/>
            <person name="Banko M.R."/>
            <person name="Gozani O."/>
            <person name="Brunet A."/>
        </authorList>
    </citation>
    <scope>FUNCTION</scope>
    <scope>SUBCELLULAR LOCATION</scope>
    <scope>DISRUPTION PHENOTYPE</scope>
</reference>
<reference key="4">
    <citation type="journal article" date="2011" name="Nature">
        <title>Transgenerational epigenetic inheritance of longevity in Caenorhabditis elegans.</title>
        <authorList>
            <person name="Greer E.L."/>
            <person name="Maures T.J."/>
            <person name="Ucar D."/>
            <person name="Hauswirth A.G."/>
            <person name="Mancini E."/>
            <person name="Lim J.P."/>
            <person name="Benayoun B.A."/>
            <person name="Shi Y."/>
            <person name="Brunet A."/>
        </authorList>
    </citation>
    <scope>FUNCTION</scope>
</reference>
<reference key="5">
    <citation type="journal article" date="2012" name="Aging Cell">
        <title>Two SET domain containing genes link epigenetic changes and aging in Caenorhabditis elegans.</title>
        <authorList>
            <person name="Ni Z."/>
            <person name="Ebata A."/>
            <person name="Alipanahiramandi E."/>
            <person name="Lee S.S."/>
        </authorList>
    </citation>
    <scope>FUNCTION</scope>
    <scope>DISRUPTION PHENOTYPE</scope>
</reference>
<accession>Q23541</accession>
<protein>
    <recommendedName>
        <fullName>Lysine-specific demethylase rbr-2</fullName>
    </recommendedName>
    <alternativeName>
        <fullName>Histone demethylase rbr-2</fullName>
        <ecNumber evidence="8">1.14.11.67</ecNumber>
    </alternativeName>
    <alternativeName>
        <fullName>Jumonji/ARID domain-containing protein rbr-2</fullName>
    </alternativeName>
    <alternativeName>
        <fullName evidence="12">[histone H3]-trimethyl-L-lysine(4) demethylase rbr-2</fullName>
    </alternativeName>
</protein>
<dbReference type="EC" id="1.14.11.67" evidence="8"/>
<dbReference type="EMBL" id="Z69385">
    <property type="protein sequence ID" value="CAA93426.2"/>
    <property type="molecule type" value="Genomic_DNA"/>
</dbReference>
<dbReference type="PIR" id="T27924">
    <property type="entry name" value="T27924"/>
</dbReference>
<dbReference type="RefSeq" id="NP_502032.2">
    <property type="nucleotide sequence ID" value="NM_069631.7"/>
</dbReference>
<dbReference type="SMR" id="Q23541"/>
<dbReference type="BioGRID" id="43086">
    <property type="interactions" value="32"/>
</dbReference>
<dbReference type="FunCoup" id="Q23541">
    <property type="interactions" value="3340"/>
</dbReference>
<dbReference type="IntAct" id="Q23541">
    <property type="interactions" value="26"/>
</dbReference>
<dbReference type="STRING" id="6239.ZK593.4a.1"/>
<dbReference type="PaxDb" id="6239-ZK593.4"/>
<dbReference type="PeptideAtlas" id="Q23541"/>
<dbReference type="EnsemblMetazoa" id="ZK593.4a.1">
    <property type="protein sequence ID" value="ZK593.4a.1"/>
    <property type="gene ID" value="WBGene00004319"/>
</dbReference>
<dbReference type="GeneID" id="177985"/>
<dbReference type="KEGG" id="cel:CELE_ZK593.4"/>
<dbReference type="UCSC" id="ZK593.4">
    <property type="organism name" value="c. elegans"/>
</dbReference>
<dbReference type="AGR" id="WB:WBGene00004319"/>
<dbReference type="CTD" id="177985"/>
<dbReference type="WormBase" id="ZK593.4a">
    <property type="protein sequence ID" value="CE35704"/>
    <property type="gene ID" value="WBGene00004319"/>
    <property type="gene designation" value="rbr-2"/>
</dbReference>
<dbReference type="eggNOG" id="KOG1246">
    <property type="taxonomic scope" value="Eukaryota"/>
</dbReference>
<dbReference type="GeneTree" id="ENSGT00940000168915"/>
<dbReference type="InParanoid" id="Q23541"/>
<dbReference type="OMA" id="CKTTLFM"/>
<dbReference type="OrthoDB" id="1678912at2759"/>
<dbReference type="PhylomeDB" id="Q23541"/>
<dbReference type="BRENDA" id="1.14.11.67">
    <property type="organism ID" value="1045"/>
</dbReference>
<dbReference type="Reactome" id="R-CEL-3214842">
    <property type="pathway name" value="HDMs demethylate histones"/>
</dbReference>
<dbReference type="SignaLink" id="Q23541"/>
<dbReference type="PRO" id="PR:Q23541"/>
<dbReference type="Proteomes" id="UP000001940">
    <property type="component" value="Chromosome IV"/>
</dbReference>
<dbReference type="Bgee" id="WBGene00004319">
    <property type="expression patterns" value="Expressed in germ line (C elegans) and 4 other cell types or tissues"/>
</dbReference>
<dbReference type="ExpressionAtlas" id="Q23541">
    <property type="expression patterns" value="baseline and differential"/>
</dbReference>
<dbReference type="GO" id="GO:0000785">
    <property type="term" value="C:chromatin"/>
    <property type="evidence" value="ECO:0000318"/>
    <property type="project" value="GO_Central"/>
</dbReference>
<dbReference type="GO" id="GO:0005634">
    <property type="term" value="C:nucleus"/>
    <property type="evidence" value="ECO:0000314"/>
    <property type="project" value="WormBase"/>
</dbReference>
<dbReference type="GO" id="GO:0003677">
    <property type="term" value="F:DNA binding"/>
    <property type="evidence" value="ECO:0007669"/>
    <property type="project" value="InterPro"/>
</dbReference>
<dbReference type="GO" id="GO:0034647">
    <property type="term" value="F:histone H3K4me/H3K4me2/H3K4me3 demethylase activity"/>
    <property type="evidence" value="ECO:0000314"/>
    <property type="project" value="WormBase"/>
</dbReference>
<dbReference type="GO" id="GO:0008270">
    <property type="term" value="F:zinc ion binding"/>
    <property type="evidence" value="ECO:0007669"/>
    <property type="project" value="UniProtKB-KW"/>
</dbReference>
<dbReference type="GO" id="GO:0006338">
    <property type="term" value="P:chromatin remodeling"/>
    <property type="evidence" value="ECO:0000318"/>
    <property type="project" value="GO_Central"/>
</dbReference>
<dbReference type="GO" id="GO:0008340">
    <property type="term" value="P:determination of adult lifespan"/>
    <property type="evidence" value="ECO:0000315"/>
    <property type="project" value="WormBase"/>
</dbReference>
<dbReference type="GO" id="GO:0006355">
    <property type="term" value="P:regulation of DNA-templated transcription"/>
    <property type="evidence" value="ECO:0000250"/>
    <property type="project" value="WormBase"/>
</dbReference>
<dbReference type="GO" id="GO:0040028">
    <property type="term" value="P:regulation of vulval development"/>
    <property type="evidence" value="ECO:0000315"/>
    <property type="project" value="WormBase"/>
</dbReference>
<dbReference type="CDD" id="cd16100">
    <property type="entry name" value="ARID"/>
    <property type="match status" value="1"/>
</dbReference>
<dbReference type="CDD" id="cd15610">
    <property type="entry name" value="PHD3_KDM5A_like"/>
    <property type="match status" value="1"/>
</dbReference>
<dbReference type="FunFam" id="2.60.120.650:FF:000036">
    <property type="entry name" value="Lysine-specific demethylase rbr-2"/>
    <property type="match status" value="1"/>
</dbReference>
<dbReference type="FunFam" id="1.10.150.60:FF:000016">
    <property type="entry name" value="Putative Lysine-specific demethylase 5B"/>
    <property type="match status" value="1"/>
</dbReference>
<dbReference type="Gene3D" id="1.10.150.60">
    <property type="entry name" value="ARID DNA-binding domain"/>
    <property type="match status" value="1"/>
</dbReference>
<dbReference type="Gene3D" id="2.60.120.650">
    <property type="entry name" value="Cupin"/>
    <property type="match status" value="1"/>
</dbReference>
<dbReference type="Gene3D" id="3.30.40.10">
    <property type="entry name" value="Zinc/RING finger domain, C3HC4 (zinc finger)"/>
    <property type="match status" value="3"/>
</dbReference>
<dbReference type="InterPro" id="IPR001606">
    <property type="entry name" value="ARID_dom"/>
</dbReference>
<dbReference type="InterPro" id="IPR036431">
    <property type="entry name" value="ARID_dom_sf"/>
</dbReference>
<dbReference type="InterPro" id="IPR003347">
    <property type="entry name" value="JmjC_dom"/>
</dbReference>
<dbReference type="InterPro" id="IPR003349">
    <property type="entry name" value="JmjN"/>
</dbReference>
<dbReference type="InterPro" id="IPR048615">
    <property type="entry name" value="KDM5_C-hel"/>
</dbReference>
<dbReference type="InterPro" id="IPR013637">
    <property type="entry name" value="Lys_sp_deMease-like_dom"/>
</dbReference>
<dbReference type="InterPro" id="IPR004198">
    <property type="entry name" value="Znf_C5HC2"/>
</dbReference>
<dbReference type="InterPro" id="IPR011011">
    <property type="entry name" value="Znf_FYVE_PHD"/>
</dbReference>
<dbReference type="InterPro" id="IPR001965">
    <property type="entry name" value="Znf_PHD"/>
</dbReference>
<dbReference type="InterPro" id="IPR019787">
    <property type="entry name" value="Znf_PHD-finger"/>
</dbReference>
<dbReference type="InterPro" id="IPR013083">
    <property type="entry name" value="Znf_RING/FYVE/PHD"/>
</dbReference>
<dbReference type="PANTHER" id="PTHR10694">
    <property type="entry name" value="LYSINE-SPECIFIC DEMETHYLASE"/>
    <property type="match status" value="1"/>
</dbReference>
<dbReference type="PANTHER" id="PTHR10694:SF33">
    <property type="entry name" value="LYSINE-SPECIFIC DEMETHYLASE 5"/>
    <property type="match status" value="1"/>
</dbReference>
<dbReference type="Pfam" id="PF01388">
    <property type="entry name" value="ARID"/>
    <property type="match status" value="1"/>
</dbReference>
<dbReference type="Pfam" id="PF02373">
    <property type="entry name" value="JmjC"/>
    <property type="match status" value="1"/>
</dbReference>
<dbReference type="Pfam" id="PF02375">
    <property type="entry name" value="JmjN"/>
    <property type="match status" value="1"/>
</dbReference>
<dbReference type="Pfam" id="PF21323">
    <property type="entry name" value="KDM5_C-hel"/>
    <property type="match status" value="1"/>
</dbReference>
<dbReference type="Pfam" id="PF00628">
    <property type="entry name" value="PHD"/>
    <property type="match status" value="1"/>
</dbReference>
<dbReference type="Pfam" id="PF08429">
    <property type="entry name" value="PLU-1"/>
    <property type="match status" value="1"/>
</dbReference>
<dbReference type="Pfam" id="PF02928">
    <property type="entry name" value="zf-C5HC2"/>
    <property type="match status" value="1"/>
</dbReference>
<dbReference type="SMART" id="SM01014">
    <property type="entry name" value="ARID"/>
    <property type="match status" value="1"/>
</dbReference>
<dbReference type="SMART" id="SM00501">
    <property type="entry name" value="BRIGHT"/>
    <property type="match status" value="1"/>
</dbReference>
<dbReference type="SMART" id="SM00558">
    <property type="entry name" value="JmjC"/>
    <property type="match status" value="1"/>
</dbReference>
<dbReference type="SMART" id="SM00545">
    <property type="entry name" value="JmjN"/>
    <property type="match status" value="1"/>
</dbReference>
<dbReference type="SMART" id="SM00249">
    <property type="entry name" value="PHD"/>
    <property type="match status" value="3"/>
</dbReference>
<dbReference type="SUPFAM" id="SSF46774">
    <property type="entry name" value="ARID-like"/>
    <property type="match status" value="1"/>
</dbReference>
<dbReference type="SUPFAM" id="SSF51197">
    <property type="entry name" value="Clavaminate synthase-like"/>
    <property type="match status" value="1"/>
</dbReference>
<dbReference type="SUPFAM" id="SSF57903">
    <property type="entry name" value="FYVE/PHD zinc finger"/>
    <property type="match status" value="3"/>
</dbReference>
<dbReference type="PROSITE" id="PS51011">
    <property type="entry name" value="ARID"/>
    <property type="match status" value="1"/>
</dbReference>
<dbReference type="PROSITE" id="PS51184">
    <property type="entry name" value="JMJC"/>
    <property type="match status" value="1"/>
</dbReference>
<dbReference type="PROSITE" id="PS51183">
    <property type="entry name" value="JMJN"/>
    <property type="match status" value="1"/>
</dbReference>
<dbReference type="PROSITE" id="PS01359">
    <property type="entry name" value="ZF_PHD_1"/>
    <property type="match status" value="1"/>
</dbReference>
<dbReference type="PROSITE" id="PS50016">
    <property type="entry name" value="ZF_PHD_2"/>
    <property type="match status" value="1"/>
</dbReference>
<sequence length="1477" mass="170791">MRARRQENSISTPSAPSTSTSPRKKASIGNSRSKNHGSKMEMYDQFYKKFVRPPMAPIYYPTEEEFSDPIEYVAKIRHEAEKFGVVKIVPPANFKPPFAIDKEAFTFRPRTQKLNEVEAIVKEKHTFIDRLINFNRYSGLTFEFPVDRDGNIVDLYRLHRIVQNFGGCEEVNEDEKWRDVAREYLPKEQMARGVPSAFINLIRSHYNLHIEPFNRNLKEKAMKNDDESDDEMEELKHKYQHHHGTMRTEIEVPNDKTTEGGEDECPVSMQSGRRRSKNKKASSSRKTLGTSSKKNSTRGRKNKKKAEGDDDDDEDPMDQVFCVACNEGKDEDLLLLCDIDGCNNGRHTYCCDPVLDEVPEGEWRCPKCIESEDAKIGLDWGFYDADTEYNLNSFTEFANKWKCDYFGVKDVSQVSCDAVERSFWKNVISHENPVSVKYGADLITSRVGSGFPRKEDKHTGPDLKLKQQYASHAWNLNNMPVLRESVLSHFNTGISGMMVPWVYVGMCFSTFCWHTEDHWTYSVNYNHFGERKIWYGVGGEDAEKFEDALKKIAPGLTGRQRDLFHHMTTAANPHLLRSLGVPIHSVHQNAGEFVITFPRAYHAGFNEGLNFAEAVNFAPIDWLSKGRECVESYSNVRRYLVFSHDELLFKMVEAMDKLGISMSLATHEELIRIYEKQKMLRELLARLGVSNRQMQQVMFEKIPDEQRSCRFCKTTLFMCALVCNKHKKMTCVEHHDHLCNSCTTKDYRYQYRFELDQLNNMCDELGKRTVNYNGWKEESDEMLEEEGKPKLERIEEFIDSAKQNKYPQTDQVHKLITIRHTAKSAIEKANQLLFKKVRTRTKTRCQRADTRTDTEGVRSLIEQMQAMDCNLTVIIDKLEKWMEQVEMWRNRAKDAIYREQEYSKEEIEKIIEEGDEYDIKLEEIDELRKVIQMKDWSDRARKVTTWKATPDMEKDIDFEYKLRYASSDILSLIRDSPRNPTDGTSKLVFELQQMLRDANTLEVIANNFCENPALDQLQSIWQSLRETDWFYEKYINMVRYEIIHVAKIKSMIDAAIPVLSEFDLKTQLQKIVNVEITLSKAAEISKAFETSKCLNGSEEHLGILDMISTMNAFTQRIAILFKPNNAYHNLFEILSERDDLTPLAEGQTIPLYFQGGAVHPSDEWHQMKEFESLDQIVHHQSSLREMQMRIFEKVKQANSARGLEACSCLGFNKSDDSESTLTCIMCDSEFHVRCCEWSPFLEKLPEGCFLCVRCLRGQRPVIDDVTTALNGTPSGCLETHLVRNLIQKTRGITQNLMEAANKRKSGESSDDICKIALFDWLSCEILNPNGLPKARELISEFYMEYLQKQSSAALELKNRPVRSKPSVSLFDPKITAKRKRPSVSHKETSKKSRKRQSQASPSEYYEDESEFKSCQARACLKPYGDSVNWVMCEAGCKNWFHVICLGFTLREINDMHEYRCSSCLDHADSPTSSVSTD</sequence>
<organism>
    <name type="scientific">Caenorhabditis elegans</name>
    <dbReference type="NCBI Taxonomy" id="6239"/>
    <lineage>
        <taxon>Eukaryota</taxon>
        <taxon>Metazoa</taxon>
        <taxon>Ecdysozoa</taxon>
        <taxon>Nematoda</taxon>
        <taxon>Chromadorea</taxon>
        <taxon>Rhabditida</taxon>
        <taxon>Rhabditina</taxon>
        <taxon>Rhabditomorpha</taxon>
        <taxon>Rhabditoidea</taxon>
        <taxon>Rhabditidae</taxon>
        <taxon>Peloderinae</taxon>
        <taxon>Caenorhabditis</taxon>
    </lineage>
</organism>
<evidence type="ECO:0000250" key="1"/>
<evidence type="ECO:0000255" key="2"/>
<evidence type="ECO:0000255" key="3">
    <source>
        <dbReference type="PROSITE-ProRule" id="PRU00146"/>
    </source>
</evidence>
<evidence type="ECO:0000255" key="4">
    <source>
        <dbReference type="PROSITE-ProRule" id="PRU00355"/>
    </source>
</evidence>
<evidence type="ECO:0000255" key="5">
    <source>
        <dbReference type="PROSITE-ProRule" id="PRU00537"/>
    </source>
</evidence>
<evidence type="ECO:0000255" key="6">
    <source>
        <dbReference type="PROSITE-ProRule" id="PRU00538"/>
    </source>
</evidence>
<evidence type="ECO:0000256" key="7">
    <source>
        <dbReference type="SAM" id="MobiDB-lite"/>
    </source>
</evidence>
<evidence type="ECO:0000269" key="8">
    <source>
    </source>
</evidence>
<evidence type="ECO:0000269" key="9">
    <source>
    </source>
</evidence>
<evidence type="ECO:0000269" key="10">
    <source>
    </source>
</evidence>
<evidence type="ECO:0000269" key="11">
    <source>
    </source>
</evidence>
<evidence type="ECO:0000305" key="12"/>
<proteinExistence type="evidence at protein level"/>
<keyword id="KW-0156">Chromatin regulator</keyword>
<keyword id="KW-0175">Coiled coil</keyword>
<keyword id="KW-0223">Dioxygenase</keyword>
<keyword id="KW-0408">Iron</keyword>
<keyword id="KW-0479">Metal-binding</keyword>
<keyword id="KW-0539">Nucleus</keyword>
<keyword id="KW-0560">Oxidoreductase</keyword>
<keyword id="KW-1185">Reference proteome</keyword>
<keyword id="KW-0677">Repeat</keyword>
<keyword id="KW-0804">Transcription</keyword>
<keyword id="KW-0805">Transcription regulation</keyword>
<keyword id="KW-0862">Zinc</keyword>
<keyword id="KW-0863">Zinc-finger</keyword>
<gene>
    <name type="primary">rbr-2</name>
    <name type="ORF">ZK593.4</name>
</gene>